<name>RL4_SHESR</name>
<comment type="function">
    <text evidence="1">One of the primary rRNA binding proteins, this protein initially binds near the 5'-end of the 23S rRNA. It is important during the early stages of 50S assembly. It makes multiple contacts with different domains of the 23S rRNA in the assembled 50S subunit and ribosome.</text>
</comment>
<comment type="function">
    <text evidence="1">Forms part of the polypeptide exit tunnel.</text>
</comment>
<comment type="subunit">
    <text evidence="1">Part of the 50S ribosomal subunit.</text>
</comment>
<comment type="similarity">
    <text evidence="1">Belongs to the universal ribosomal protein uL4 family.</text>
</comment>
<sequence>MELVLKDAQSALEVSETTFGRDFNEALVHQVVVAYAANARQGTRAQKTRAEVTGSGKKPWRQKGTGRARAGGVKGPIWRGGGVTFAAKTQDHSQKVNKKMYRGALKSILSELVRQDRLVVVESFSVEAPKTKELKAKLKAMNLEDVLIVTAEVDENLFLAARNLYKVDVRDVAGLDPVSLIAFNTVLVTADAVKQIEEMLA</sequence>
<dbReference type="EMBL" id="CP000444">
    <property type="protein sequence ID" value="ABI41201.1"/>
    <property type="molecule type" value="Genomic_DNA"/>
</dbReference>
<dbReference type="SMR" id="Q0I0A4"/>
<dbReference type="KEGG" id="shm:Shewmr7_0195"/>
<dbReference type="HOGENOM" id="CLU_041575_5_2_6"/>
<dbReference type="GO" id="GO:1990904">
    <property type="term" value="C:ribonucleoprotein complex"/>
    <property type="evidence" value="ECO:0007669"/>
    <property type="project" value="UniProtKB-KW"/>
</dbReference>
<dbReference type="GO" id="GO:0005840">
    <property type="term" value="C:ribosome"/>
    <property type="evidence" value="ECO:0007669"/>
    <property type="project" value="UniProtKB-KW"/>
</dbReference>
<dbReference type="GO" id="GO:0019843">
    <property type="term" value="F:rRNA binding"/>
    <property type="evidence" value="ECO:0007669"/>
    <property type="project" value="UniProtKB-UniRule"/>
</dbReference>
<dbReference type="GO" id="GO:0003735">
    <property type="term" value="F:structural constituent of ribosome"/>
    <property type="evidence" value="ECO:0007669"/>
    <property type="project" value="InterPro"/>
</dbReference>
<dbReference type="GO" id="GO:0006412">
    <property type="term" value="P:translation"/>
    <property type="evidence" value="ECO:0007669"/>
    <property type="project" value="UniProtKB-UniRule"/>
</dbReference>
<dbReference type="FunFam" id="3.40.1370.10:FF:000001">
    <property type="entry name" value="50S ribosomal protein L4"/>
    <property type="match status" value="1"/>
</dbReference>
<dbReference type="Gene3D" id="3.40.1370.10">
    <property type="match status" value="1"/>
</dbReference>
<dbReference type="HAMAP" id="MF_01328_B">
    <property type="entry name" value="Ribosomal_uL4_B"/>
    <property type="match status" value="1"/>
</dbReference>
<dbReference type="InterPro" id="IPR002136">
    <property type="entry name" value="Ribosomal_uL4"/>
</dbReference>
<dbReference type="InterPro" id="IPR013005">
    <property type="entry name" value="Ribosomal_uL4-like"/>
</dbReference>
<dbReference type="InterPro" id="IPR023574">
    <property type="entry name" value="Ribosomal_uL4_dom_sf"/>
</dbReference>
<dbReference type="NCBIfam" id="TIGR03953">
    <property type="entry name" value="rplD_bact"/>
    <property type="match status" value="1"/>
</dbReference>
<dbReference type="PANTHER" id="PTHR10746">
    <property type="entry name" value="50S RIBOSOMAL PROTEIN L4"/>
    <property type="match status" value="1"/>
</dbReference>
<dbReference type="PANTHER" id="PTHR10746:SF6">
    <property type="entry name" value="LARGE RIBOSOMAL SUBUNIT PROTEIN UL4M"/>
    <property type="match status" value="1"/>
</dbReference>
<dbReference type="Pfam" id="PF00573">
    <property type="entry name" value="Ribosomal_L4"/>
    <property type="match status" value="1"/>
</dbReference>
<dbReference type="SUPFAM" id="SSF52166">
    <property type="entry name" value="Ribosomal protein L4"/>
    <property type="match status" value="1"/>
</dbReference>
<organism>
    <name type="scientific">Shewanella sp. (strain MR-7)</name>
    <dbReference type="NCBI Taxonomy" id="60481"/>
    <lineage>
        <taxon>Bacteria</taxon>
        <taxon>Pseudomonadati</taxon>
        <taxon>Pseudomonadota</taxon>
        <taxon>Gammaproteobacteria</taxon>
        <taxon>Alteromonadales</taxon>
        <taxon>Shewanellaceae</taxon>
        <taxon>Shewanella</taxon>
    </lineage>
</organism>
<keyword id="KW-0687">Ribonucleoprotein</keyword>
<keyword id="KW-0689">Ribosomal protein</keyword>
<keyword id="KW-0694">RNA-binding</keyword>
<keyword id="KW-0699">rRNA-binding</keyword>
<protein>
    <recommendedName>
        <fullName evidence="1">Large ribosomal subunit protein uL4</fullName>
    </recommendedName>
    <alternativeName>
        <fullName evidence="3">50S ribosomal protein L4</fullName>
    </alternativeName>
</protein>
<reference key="1">
    <citation type="submission" date="2006-08" db="EMBL/GenBank/DDBJ databases">
        <title>Complete sequence of chromosome 1 of Shewanella sp. MR-7.</title>
        <authorList>
            <person name="Copeland A."/>
            <person name="Lucas S."/>
            <person name="Lapidus A."/>
            <person name="Barry K."/>
            <person name="Detter J.C."/>
            <person name="Glavina del Rio T."/>
            <person name="Hammon N."/>
            <person name="Israni S."/>
            <person name="Dalin E."/>
            <person name="Tice H."/>
            <person name="Pitluck S."/>
            <person name="Kiss H."/>
            <person name="Brettin T."/>
            <person name="Bruce D."/>
            <person name="Han C."/>
            <person name="Tapia R."/>
            <person name="Gilna P."/>
            <person name="Schmutz J."/>
            <person name="Larimer F."/>
            <person name="Land M."/>
            <person name="Hauser L."/>
            <person name="Kyrpides N."/>
            <person name="Mikhailova N."/>
            <person name="Nealson K."/>
            <person name="Konstantinidis K."/>
            <person name="Klappenbach J."/>
            <person name="Tiedje J."/>
            <person name="Richardson P."/>
        </authorList>
    </citation>
    <scope>NUCLEOTIDE SEQUENCE [LARGE SCALE GENOMIC DNA]</scope>
    <source>
        <strain>MR-7</strain>
    </source>
</reference>
<gene>
    <name evidence="1" type="primary">rplD</name>
    <name type="ordered locus">Shewmr7_0195</name>
</gene>
<feature type="chain" id="PRO_1000052499" description="Large ribosomal subunit protein uL4">
    <location>
        <begin position="1"/>
        <end position="201"/>
    </location>
</feature>
<feature type="region of interest" description="Disordered" evidence="2">
    <location>
        <begin position="45"/>
        <end position="71"/>
    </location>
</feature>
<evidence type="ECO:0000255" key="1">
    <source>
        <dbReference type="HAMAP-Rule" id="MF_01328"/>
    </source>
</evidence>
<evidence type="ECO:0000256" key="2">
    <source>
        <dbReference type="SAM" id="MobiDB-lite"/>
    </source>
</evidence>
<evidence type="ECO:0000305" key="3"/>
<accession>Q0I0A4</accession>
<proteinExistence type="inferred from homology"/>